<name>DCNL5_MOUSE</name>
<gene>
    <name evidence="6 9" type="primary">Dcun1d5</name>
    <name evidence="6" type="synonym">SCCRO5</name>
</gene>
<dbReference type="EMBL" id="AK013933">
    <property type="protein sequence ID" value="BAB29066.1"/>
    <property type="molecule type" value="mRNA"/>
</dbReference>
<dbReference type="EMBL" id="AK014737">
    <property type="protein sequence ID" value="BAB29526.2"/>
    <property type="molecule type" value="mRNA"/>
</dbReference>
<dbReference type="EMBL" id="AK134862">
    <property type="protein sequence ID" value="BAE22318.1"/>
    <property type="molecule type" value="mRNA"/>
</dbReference>
<dbReference type="EMBL" id="BC020048">
    <property type="status" value="NOT_ANNOTATED_CDS"/>
    <property type="molecule type" value="mRNA"/>
</dbReference>
<dbReference type="EMBL" id="BC020089">
    <property type="protein sequence ID" value="AAH20089.1"/>
    <property type="molecule type" value="mRNA"/>
</dbReference>
<dbReference type="CCDS" id="CCDS40529.1"/>
<dbReference type="RefSeq" id="NP_084051.1">
    <property type="nucleotide sequence ID" value="NM_029775.3"/>
</dbReference>
<dbReference type="SMR" id="Q9CXV9"/>
<dbReference type="BioGRID" id="218359">
    <property type="interactions" value="1"/>
</dbReference>
<dbReference type="FunCoup" id="Q9CXV9">
    <property type="interactions" value="2021"/>
</dbReference>
<dbReference type="IntAct" id="Q9CXV9">
    <property type="interactions" value="1"/>
</dbReference>
<dbReference type="MINT" id="Q9CXV9"/>
<dbReference type="STRING" id="10090.ENSMUSP00000150564"/>
<dbReference type="iPTMnet" id="Q9CXV9"/>
<dbReference type="PhosphoSitePlus" id="Q9CXV9"/>
<dbReference type="SwissPalm" id="Q9CXV9"/>
<dbReference type="PaxDb" id="10090-ENSMUSP00000034499"/>
<dbReference type="PeptideAtlas" id="Q9CXV9"/>
<dbReference type="ProteomicsDB" id="279886"/>
<dbReference type="Pumba" id="Q9CXV9"/>
<dbReference type="Antibodypedia" id="45452">
    <property type="antibodies" value="30 antibodies from 16 providers"/>
</dbReference>
<dbReference type="DNASU" id="76863"/>
<dbReference type="Ensembl" id="ENSMUST00000215683.2">
    <property type="protein sequence ID" value="ENSMUSP00000150564.2"/>
    <property type="gene ID" value="ENSMUSG00000032002.11"/>
</dbReference>
<dbReference type="GeneID" id="76863"/>
<dbReference type="KEGG" id="mmu:76863"/>
<dbReference type="UCSC" id="uc009ocf.1">
    <property type="organism name" value="mouse"/>
</dbReference>
<dbReference type="AGR" id="MGI:1924113"/>
<dbReference type="CTD" id="84259"/>
<dbReference type="MGI" id="MGI:1924113">
    <property type="gene designation" value="Dcun1d5"/>
</dbReference>
<dbReference type="VEuPathDB" id="HostDB:ENSMUSG00000032002"/>
<dbReference type="eggNOG" id="KOG3077">
    <property type="taxonomic scope" value="Eukaryota"/>
</dbReference>
<dbReference type="GeneTree" id="ENSGT00940000156155"/>
<dbReference type="HOGENOM" id="CLU_047042_3_1_1"/>
<dbReference type="InParanoid" id="Q9CXV9"/>
<dbReference type="OMA" id="HERKCKI"/>
<dbReference type="PhylomeDB" id="Q9CXV9"/>
<dbReference type="TreeFam" id="TF354270"/>
<dbReference type="Reactome" id="R-MMU-8951664">
    <property type="pathway name" value="Neddylation"/>
</dbReference>
<dbReference type="BioGRID-ORCS" id="76863">
    <property type="hits" value="4 hits in 80 CRISPR screens"/>
</dbReference>
<dbReference type="ChiTaRS" id="Dcun1d5">
    <property type="organism name" value="mouse"/>
</dbReference>
<dbReference type="PRO" id="PR:Q9CXV9"/>
<dbReference type="Proteomes" id="UP000000589">
    <property type="component" value="Chromosome 9"/>
</dbReference>
<dbReference type="RNAct" id="Q9CXV9">
    <property type="molecule type" value="protein"/>
</dbReference>
<dbReference type="Bgee" id="ENSMUSG00000032002">
    <property type="expression patterns" value="Expressed in animal zygote and 288 other cell types or tissues"/>
</dbReference>
<dbReference type="ExpressionAtlas" id="Q9CXV9">
    <property type="expression patterns" value="baseline and differential"/>
</dbReference>
<dbReference type="GO" id="GO:0005737">
    <property type="term" value="C:cytoplasm"/>
    <property type="evidence" value="ECO:0007669"/>
    <property type="project" value="UniProtKB-KW"/>
</dbReference>
<dbReference type="GO" id="GO:0005634">
    <property type="term" value="C:nucleus"/>
    <property type="evidence" value="ECO:0000314"/>
    <property type="project" value="UniProtKB"/>
</dbReference>
<dbReference type="GO" id="GO:0005819">
    <property type="term" value="C:spindle"/>
    <property type="evidence" value="ECO:0000250"/>
    <property type="project" value="UniProtKB"/>
</dbReference>
<dbReference type="GO" id="GO:0097602">
    <property type="term" value="F:cullin family protein binding"/>
    <property type="evidence" value="ECO:0000250"/>
    <property type="project" value="UniProtKB"/>
</dbReference>
<dbReference type="GO" id="GO:0006974">
    <property type="term" value="P:DNA damage response"/>
    <property type="evidence" value="ECO:0000250"/>
    <property type="project" value="UniProtKB"/>
</dbReference>
<dbReference type="GO" id="GO:2000436">
    <property type="term" value="P:positive regulation of protein neddylation"/>
    <property type="evidence" value="ECO:0000250"/>
    <property type="project" value="UniProtKB"/>
</dbReference>
<dbReference type="GO" id="GO:0001558">
    <property type="term" value="P:regulation of cell growth"/>
    <property type="evidence" value="ECO:0000250"/>
    <property type="project" value="UniProtKB"/>
</dbReference>
<dbReference type="GO" id="GO:2000434">
    <property type="term" value="P:regulation of protein neddylation"/>
    <property type="evidence" value="ECO:0000250"/>
    <property type="project" value="UniProtKB"/>
</dbReference>
<dbReference type="FunFam" id="1.10.238.10:FF:000041">
    <property type="entry name" value="DCN1-like protein"/>
    <property type="match status" value="1"/>
</dbReference>
<dbReference type="FunFam" id="1.10.238.200:FF:000002">
    <property type="entry name" value="DCN1-like protein"/>
    <property type="match status" value="1"/>
</dbReference>
<dbReference type="Gene3D" id="1.10.238.200">
    <property type="entry name" value="Cullin, PONY binding domain"/>
    <property type="match status" value="1"/>
</dbReference>
<dbReference type="Gene3D" id="1.10.238.10">
    <property type="entry name" value="EF-hand"/>
    <property type="match status" value="1"/>
</dbReference>
<dbReference type="InterPro" id="IPR014764">
    <property type="entry name" value="DCN-prot"/>
</dbReference>
<dbReference type="InterPro" id="IPR042460">
    <property type="entry name" value="DCN1-like_PONY"/>
</dbReference>
<dbReference type="InterPro" id="IPR005176">
    <property type="entry name" value="PONY_dom"/>
</dbReference>
<dbReference type="PANTHER" id="PTHR12281:SF6">
    <property type="entry name" value="DCN1-LIKE PROTEIN 5"/>
    <property type="match status" value="1"/>
</dbReference>
<dbReference type="PANTHER" id="PTHR12281">
    <property type="entry name" value="RP42 RELATED"/>
    <property type="match status" value="1"/>
</dbReference>
<dbReference type="Pfam" id="PF03556">
    <property type="entry name" value="Cullin_binding"/>
    <property type="match status" value="1"/>
</dbReference>
<dbReference type="PROSITE" id="PS51229">
    <property type="entry name" value="DCUN1"/>
    <property type="match status" value="1"/>
</dbReference>
<reference key="1">
    <citation type="journal article" date="2005" name="Science">
        <title>The transcriptional landscape of the mammalian genome.</title>
        <authorList>
            <person name="Carninci P."/>
            <person name="Kasukawa T."/>
            <person name="Katayama S."/>
            <person name="Gough J."/>
            <person name="Frith M.C."/>
            <person name="Maeda N."/>
            <person name="Oyama R."/>
            <person name="Ravasi T."/>
            <person name="Lenhard B."/>
            <person name="Wells C."/>
            <person name="Kodzius R."/>
            <person name="Shimokawa K."/>
            <person name="Bajic V.B."/>
            <person name="Brenner S.E."/>
            <person name="Batalov S."/>
            <person name="Forrest A.R."/>
            <person name="Zavolan M."/>
            <person name="Davis M.J."/>
            <person name="Wilming L.G."/>
            <person name="Aidinis V."/>
            <person name="Allen J.E."/>
            <person name="Ambesi-Impiombato A."/>
            <person name="Apweiler R."/>
            <person name="Aturaliya R.N."/>
            <person name="Bailey T.L."/>
            <person name="Bansal M."/>
            <person name="Baxter L."/>
            <person name="Beisel K.W."/>
            <person name="Bersano T."/>
            <person name="Bono H."/>
            <person name="Chalk A.M."/>
            <person name="Chiu K.P."/>
            <person name="Choudhary V."/>
            <person name="Christoffels A."/>
            <person name="Clutterbuck D.R."/>
            <person name="Crowe M.L."/>
            <person name="Dalla E."/>
            <person name="Dalrymple B.P."/>
            <person name="de Bono B."/>
            <person name="Della Gatta G."/>
            <person name="di Bernardo D."/>
            <person name="Down T."/>
            <person name="Engstrom P."/>
            <person name="Fagiolini M."/>
            <person name="Faulkner G."/>
            <person name="Fletcher C.F."/>
            <person name="Fukushima T."/>
            <person name="Furuno M."/>
            <person name="Futaki S."/>
            <person name="Gariboldi M."/>
            <person name="Georgii-Hemming P."/>
            <person name="Gingeras T.R."/>
            <person name="Gojobori T."/>
            <person name="Green R.E."/>
            <person name="Gustincich S."/>
            <person name="Harbers M."/>
            <person name="Hayashi Y."/>
            <person name="Hensch T.K."/>
            <person name="Hirokawa N."/>
            <person name="Hill D."/>
            <person name="Huminiecki L."/>
            <person name="Iacono M."/>
            <person name="Ikeo K."/>
            <person name="Iwama A."/>
            <person name="Ishikawa T."/>
            <person name="Jakt M."/>
            <person name="Kanapin A."/>
            <person name="Katoh M."/>
            <person name="Kawasawa Y."/>
            <person name="Kelso J."/>
            <person name="Kitamura H."/>
            <person name="Kitano H."/>
            <person name="Kollias G."/>
            <person name="Krishnan S.P."/>
            <person name="Kruger A."/>
            <person name="Kummerfeld S.K."/>
            <person name="Kurochkin I.V."/>
            <person name="Lareau L.F."/>
            <person name="Lazarevic D."/>
            <person name="Lipovich L."/>
            <person name="Liu J."/>
            <person name="Liuni S."/>
            <person name="McWilliam S."/>
            <person name="Madan Babu M."/>
            <person name="Madera M."/>
            <person name="Marchionni L."/>
            <person name="Matsuda H."/>
            <person name="Matsuzawa S."/>
            <person name="Miki H."/>
            <person name="Mignone F."/>
            <person name="Miyake S."/>
            <person name="Morris K."/>
            <person name="Mottagui-Tabar S."/>
            <person name="Mulder N."/>
            <person name="Nakano N."/>
            <person name="Nakauchi H."/>
            <person name="Ng P."/>
            <person name="Nilsson R."/>
            <person name="Nishiguchi S."/>
            <person name="Nishikawa S."/>
            <person name="Nori F."/>
            <person name="Ohara O."/>
            <person name="Okazaki Y."/>
            <person name="Orlando V."/>
            <person name="Pang K.C."/>
            <person name="Pavan W.J."/>
            <person name="Pavesi G."/>
            <person name="Pesole G."/>
            <person name="Petrovsky N."/>
            <person name="Piazza S."/>
            <person name="Reed J."/>
            <person name="Reid J.F."/>
            <person name="Ring B.Z."/>
            <person name="Ringwald M."/>
            <person name="Rost B."/>
            <person name="Ruan Y."/>
            <person name="Salzberg S.L."/>
            <person name="Sandelin A."/>
            <person name="Schneider C."/>
            <person name="Schoenbach C."/>
            <person name="Sekiguchi K."/>
            <person name="Semple C.A."/>
            <person name="Seno S."/>
            <person name="Sessa L."/>
            <person name="Sheng Y."/>
            <person name="Shibata Y."/>
            <person name="Shimada H."/>
            <person name="Shimada K."/>
            <person name="Silva D."/>
            <person name="Sinclair B."/>
            <person name="Sperling S."/>
            <person name="Stupka E."/>
            <person name="Sugiura K."/>
            <person name="Sultana R."/>
            <person name="Takenaka Y."/>
            <person name="Taki K."/>
            <person name="Tammoja K."/>
            <person name="Tan S.L."/>
            <person name="Tang S."/>
            <person name="Taylor M.S."/>
            <person name="Tegner J."/>
            <person name="Teichmann S.A."/>
            <person name="Ueda H.R."/>
            <person name="van Nimwegen E."/>
            <person name="Verardo R."/>
            <person name="Wei C.L."/>
            <person name="Yagi K."/>
            <person name="Yamanishi H."/>
            <person name="Zabarovsky E."/>
            <person name="Zhu S."/>
            <person name="Zimmer A."/>
            <person name="Hide W."/>
            <person name="Bult C."/>
            <person name="Grimmond S.M."/>
            <person name="Teasdale R.D."/>
            <person name="Liu E.T."/>
            <person name="Brusic V."/>
            <person name="Quackenbush J."/>
            <person name="Wahlestedt C."/>
            <person name="Mattick J.S."/>
            <person name="Hume D.A."/>
            <person name="Kai C."/>
            <person name="Sasaki D."/>
            <person name="Tomaru Y."/>
            <person name="Fukuda S."/>
            <person name="Kanamori-Katayama M."/>
            <person name="Suzuki M."/>
            <person name="Aoki J."/>
            <person name="Arakawa T."/>
            <person name="Iida J."/>
            <person name="Imamura K."/>
            <person name="Itoh M."/>
            <person name="Kato T."/>
            <person name="Kawaji H."/>
            <person name="Kawagashira N."/>
            <person name="Kawashima T."/>
            <person name="Kojima M."/>
            <person name="Kondo S."/>
            <person name="Konno H."/>
            <person name="Nakano K."/>
            <person name="Ninomiya N."/>
            <person name="Nishio T."/>
            <person name="Okada M."/>
            <person name="Plessy C."/>
            <person name="Shibata K."/>
            <person name="Shiraki T."/>
            <person name="Suzuki S."/>
            <person name="Tagami M."/>
            <person name="Waki K."/>
            <person name="Watahiki A."/>
            <person name="Okamura-Oho Y."/>
            <person name="Suzuki H."/>
            <person name="Kawai J."/>
            <person name="Hayashizaki Y."/>
        </authorList>
    </citation>
    <scope>NUCLEOTIDE SEQUENCE [LARGE SCALE MRNA]</scope>
    <source>
        <strain>C57BL/6J</strain>
        <tissue>Embryonic head</tissue>
        <tissue>Head</tissue>
        <tissue>Olfactory bulb</tissue>
    </source>
</reference>
<reference key="2">
    <citation type="journal article" date="2004" name="Genome Res.">
        <title>The status, quality, and expansion of the NIH full-length cDNA project: the Mammalian Gene Collection (MGC).</title>
        <authorList>
            <consortium name="The MGC Project Team"/>
        </authorList>
    </citation>
    <scope>NUCLEOTIDE SEQUENCE [LARGE SCALE MRNA]</scope>
    <source>
        <strain>Czech II</strain>
        <strain>FVB/N</strain>
        <tissue>Mammary tumor</tissue>
    </source>
</reference>
<reference key="3">
    <citation type="journal article" date="2010" name="Cell">
        <title>A tissue-specific atlas of mouse protein phosphorylation and expression.</title>
        <authorList>
            <person name="Huttlin E.L."/>
            <person name="Jedrychowski M.P."/>
            <person name="Elias J.E."/>
            <person name="Goswami T."/>
            <person name="Rad R."/>
            <person name="Beausoleil S.A."/>
            <person name="Villen J."/>
            <person name="Haas W."/>
            <person name="Sowa M.E."/>
            <person name="Gygi S.P."/>
        </authorList>
    </citation>
    <scope>IDENTIFICATION BY MASS SPECTROMETRY [LARGE SCALE ANALYSIS]</scope>
    <source>
        <tissue>Kidney</tissue>
        <tissue>Lung</tissue>
        <tissue>Spleen</tissue>
        <tissue>Testis</tissue>
    </source>
</reference>
<reference key="4">
    <citation type="journal article" date="2016" name="J. Cell Sci.">
        <title>Characterization of the mammalian family of DCN-type NEDD8 E3 ligases.</title>
        <authorList>
            <person name="Keuss M.J."/>
            <person name="Thomas Y."/>
            <person name="Mcarthur R."/>
            <person name="Wood N.T."/>
            <person name="Knebel A."/>
            <person name="Kurz T."/>
        </authorList>
    </citation>
    <scope>TISSUE SPECIFICITY</scope>
</reference>
<reference key="5">
    <citation type="journal article" date="2016" name="J. Biol. Chem.">
        <title>Squamous Cell Carcinoma-related Oncogene (SCCRO) Family Members Regulate Cell Growth and Proliferation through Their Cooperative and Antagonistic Effects on Cullin Neddylation.</title>
        <authorList>
            <person name="Fu W."/>
            <person name="Sun J."/>
            <person name="Huang G."/>
            <person name="Liu J.C."/>
            <person name="Kaufman A."/>
            <person name="Ryan R.J."/>
            <person name="Ramanathan S.Y."/>
            <person name="Venkatesh T."/>
            <person name="Singh B."/>
        </authorList>
    </citation>
    <scope>FUNCTION</scope>
    <scope>TISSUE SPECIFICITY</scope>
</reference>
<reference key="6">
    <citation type="journal article" date="2018" name="PLoS ONE">
        <title>The NEDD8 E3 ligase DCNL5 is phosphorylated by IKK alpha during Toll-like receptor activation.</title>
        <authorList>
            <person name="Thomas Y."/>
            <person name="Scott D.C."/>
            <person name="Kristariyanto Y.A."/>
            <person name="Rinehart J."/>
            <person name="Clark K."/>
            <person name="Cohen P."/>
            <person name="Kurz T."/>
        </authorList>
    </citation>
    <scope>PHOSPHORYLATION AT SER-41</scope>
    <scope>IDENTIFICATION BY MASS SPECTROMETRY</scope>
    <scope>SUBCELLULAR LOCATION</scope>
    <scope>MUTAGENESIS OF SER-41; ASP-195 AND ALA-219</scope>
</reference>
<organism>
    <name type="scientific">Mus musculus</name>
    <name type="common">Mouse</name>
    <dbReference type="NCBI Taxonomy" id="10090"/>
    <lineage>
        <taxon>Eukaryota</taxon>
        <taxon>Metazoa</taxon>
        <taxon>Chordata</taxon>
        <taxon>Craniata</taxon>
        <taxon>Vertebrata</taxon>
        <taxon>Euteleostomi</taxon>
        <taxon>Mammalia</taxon>
        <taxon>Eutheria</taxon>
        <taxon>Euarchontoglires</taxon>
        <taxon>Glires</taxon>
        <taxon>Rodentia</taxon>
        <taxon>Myomorpha</taxon>
        <taxon>Muroidea</taxon>
        <taxon>Muridae</taxon>
        <taxon>Murinae</taxon>
        <taxon>Mus</taxon>
        <taxon>Mus</taxon>
    </lineage>
</organism>
<accession>Q9CXV9</accession>
<accession>Q5XKI2</accession>
<accession>Q9CUS4</accession>
<sequence length="237" mass="27579">MPVKKKRKAPGVAAAVAEDAGLKKCKIPSYCRSQPPARLISGEEDFSRKKCLAWFYEYAGPDEVVGPEGMEKFCEDIGVEPENIIMLVLAWKLEAESMGFFTKEEWLKGMTSLQCDCTEKLQSRFDFLRSQLNDISSFKNIYRYAFDFARDKDQRSLDIDTAKSMLALLLGRTWPLFSVFYQYLEQSKYRVMNKDQWYNVLEFSRTVHADLSNYDEDGAWPVLLDEFVEWQKIRQTS</sequence>
<protein>
    <recommendedName>
        <fullName evidence="8">DCN1-like protein 5</fullName>
        <shortName evidence="7">DCNL5</shortName>
    </recommendedName>
    <alternativeName>
        <fullName evidence="6">DCUN1 domain-containing protein 5</fullName>
    </alternativeName>
    <alternativeName>
        <fullName evidence="6">Defective in cullin neddylation protein 1-like protein 5</fullName>
    </alternativeName>
    <alternativeName>
        <fullName evidence="6">Squamous cell carcinoma-related oncogene 5</fullName>
    </alternativeName>
</protein>
<proteinExistence type="evidence at protein level"/>
<comment type="function">
    <text evidence="1 3">Contributes to the neddylation of all cullins by transferring NEDD8 from N-terminally acetylated NEDD8-conjugating E2s enzyme to different cullin C-terminal domain-RBX complexes which is necessary for the activation of cullin-RING E3 ubiquitin ligases (CRLs) (PubMed:26792857). May play a role in DNA damage response and may participate in cell proliferation and anchorage-independent cell growth (By similarity).</text>
</comment>
<comment type="subunit">
    <text evidence="1">Part of a complex that contains DCUN1D5, CUL1 and RBX1; this interaction is bridged by CUL1. Interacts (via the DCUN1 domain) with the unneddylated cullins: interacts with CUL1, CUL2, CUL3, CUL4A, CUL4B and CUL5; these interactions promote the cullin neddylation and the identity of the cullin dictates the affinity of the interaction. Interacts (via DCUN1 domain) with UBE2M (N-terminally acetylated form) and probably with UBE2F (N-terminally acetylated form). May also interact with regulators or subunits of cullin-RING ligases such as RBX1, RNF7, ELOB and DDB1; these interactions are bridged by cullins. Interacts with CAND1; this interaction is bridged by cullins and strongly inhibits the neddylation of cullins. These CAND-cullin-DCNL complexes can only be neddylated in the presence of a substrate adapter.</text>
</comment>
<comment type="subcellular location">
    <subcellularLocation>
        <location evidence="5">Nucleus</location>
    </subcellularLocation>
    <subcellularLocation>
        <location evidence="1">Cytoplasm</location>
        <location evidence="1">Cytoskeleton</location>
        <location evidence="1">Spindle</location>
    </subcellularLocation>
    <text evidence="1">Subcellular localization is independent of the interaction with cullins.</text>
</comment>
<comment type="tissue specificity">
    <text evidence="3 4">Highly expressed in testis (PubMed:26792857, PubMed:26906416). Lower levels of expression in skin, thymus, spleen, lymph nodes, lung, brain, heart, skeletal muscles, kidney, liver an ovary (PubMed:26792857, PubMed:26906416).</text>
</comment>
<comment type="domain">
    <text evidence="1">The DCUN1 domain, also known as PONY domain, mediates the interaction with different cullins. The DCUN1 domain mediates the interaction with the N-terminally acetylated NEDD8-conjugating E2s enzyme leading to the NEDD8 transfer from N-terminally acetylated NEDD8-conjugating E2s enzyme to different cullin C-terminal domain-RBX complexes; the neddylation efficiency correlates with the DCUN1D5-cullin and DCUN1D5-E2 interaction affinities.</text>
</comment>
<comment type="PTM">
    <text evidence="1 5">Phosphorylation at Ser-41 is independent of cullin's interaction (PubMed:29958295). Phosphorylated in response to both TICAM1 and MYD88 dependent Toll-like receptor (TLR) pathway activation (PubMed:29958295). Phosphorylated in response to IL1B stimulation (By similarity).</text>
</comment>
<comment type="sequence caution" evidence="8">
    <conflict type="frameshift">
        <sequence resource="EMBL" id="BC020048"/>
    </conflict>
</comment>
<evidence type="ECO:0000250" key="1">
    <source>
        <dbReference type="UniProtKB" id="Q9BTE7"/>
    </source>
</evidence>
<evidence type="ECO:0000255" key="2">
    <source>
        <dbReference type="PROSITE-ProRule" id="PRU00574"/>
    </source>
</evidence>
<evidence type="ECO:0000269" key="3">
    <source>
    </source>
</evidence>
<evidence type="ECO:0000269" key="4">
    <source>
    </source>
</evidence>
<evidence type="ECO:0000269" key="5">
    <source>
    </source>
</evidence>
<evidence type="ECO:0000303" key="6">
    <source>
    </source>
</evidence>
<evidence type="ECO:0000303" key="7">
    <source>
    </source>
</evidence>
<evidence type="ECO:0000305" key="8"/>
<evidence type="ECO:0000312" key="9">
    <source>
        <dbReference type="MGI" id="MGI:1924113"/>
    </source>
</evidence>
<feature type="chain" id="PRO_0000254172" description="DCN1-like protein 5">
    <location>
        <begin position="1"/>
        <end position="237"/>
    </location>
</feature>
<feature type="domain" description="DCUN1" evidence="2">
    <location>
        <begin position="46"/>
        <end position="232"/>
    </location>
</feature>
<feature type="modified residue" description="Phosphoserine; by IKKA" evidence="5">
    <location>
        <position position="41"/>
    </location>
</feature>
<feature type="mutagenesis site" description="Abolishes phosphoralation." evidence="5">
    <original>S</original>
    <variation>A</variation>
    <location>
        <position position="41"/>
    </location>
</feature>
<feature type="mutagenesis site" description="Does not affect phosphorylarion at Ser-41; when associated with R-219." evidence="5">
    <original>D</original>
    <variation>A</variation>
    <location>
        <position position="195"/>
    </location>
</feature>
<feature type="mutagenesis site" description="Does not affect phosphorylarion at Ser-41; when associated with A-195." evidence="5">
    <original>A</original>
    <variation>R</variation>
    <location>
        <position position="219"/>
    </location>
</feature>
<feature type="sequence conflict" description="In Ref. 2; BC020048." evidence="8" ref="2">
    <original>R</original>
    <variation>T</variation>
    <location>
        <position position="143"/>
    </location>
</feature>
<feature type="sequence conflict" description="In Ref. 1; BAB29526." evidence="8" ref="1">
    <original>F</original>
    <variation>I</variation>
    <location>
        <position position="148"/>
    </location>
</feature>
<feature type="sequence conflict" description="In Ref. 1; BAB29526." evidence="8" ref="1">
    <original>G</original>
    <variation>A</variation>
    <location>
        <position position="171"/>
    </location>
</feature>
<feature type="sequence conflict" description="In Ref. 1; BAB29526." evidence="8" ref="1">
    <original>G</original>
    <variation>V</variation>
    <location>
        <position position="218"/>
    </location>
</feature>
<keyword id="KW-0963">Cytoplasm</keyword>
<keyword id="KW-0206">Cytoskeleton</keyword>
<keyword id="KW-0539">Nucleus</keyword>
<keyword id="KW-0597">Phosphoprotein</keyword>
<keyword id="KW-1185">Reference proteome</keyword>